<feature type="chain" id="PRO_0000097700" description="Transcriptional corepressor SEUSS">
    <location>
        <begin position="1"/>
        <end position="877"/>
    </location>
</feature>
<feature type="region of interest" description="Disordered" evidence="2">
    <location>
        <begin position="1"/>
        <end position="42"/>
    </location>
</feature>
<feature type="region of interest" description="Disordered" evidence="2">
    <location>
        <begin position="272"/>
        <end position="295"/>
    </location>
</feature>
<feature type="region of interest" description="Dimerization">
    <location>
        <begin position="321"/>
        <end position="563"/>
    </location>
</feature>
<feature type="region of interest" description="Disordered" evidence="2">
    <location>
        <begin position="560"/>
        <end position="599"/>
    </location>
</feature>
<feature type="region of interest" description="Disordered" evidence="2">
    <location>
        <begin position="612"/>
        <end position="633"/>
    </location>
</feature>
<feature type="region of interest" description="Disordered" evidence="2">
    <location>
        <begin position="666"/>
        <end position="753"/>
    </location>
</feature>
<feature type="coiled-coil region" evidence="1">
    <location>
        <begin position="582"/>
        <end position="618"/>
    </location>
</feature>
<feature type="short sequence motif" description="Nuclear localization signal" evidence="1">
    <location>
        <begin position="330"/>
        <end position="344"/>
    </location>
</feature>
<feature type="compositionally biased region" description="Low complexity" evidence="2">
    <location>
        <begin position="272"/>
        <end position="292"/>
    </location>
</feature>
<feature type="compositionally biased region" description="Low complexity" evidence="2">
    <location>
        <begin position="590"/>
        <end position="599"/>
    </location>
</feature>
<feature type="compositionally biased region" description="Polar residues" evidence="2">
    <location>
        <begin position="614"/>
        <end position="633"/>
    </location>
</feature>
<feature type="compositionally biased region" description="Low complexity" evidence="2">
    <location>
        <begin position="688"/>
        <end position="703"/>
    </location>
</feature>
<feature type="compositionally biased region" description="Low complexity" evidence="2">
    <location>
        <begin position="711"/>
        <end position="725"/>
    </location>
</feature>
<feature type="compositionally biased region" description="Polar residues" evidence="2">
    <location>
        <begin position="726"/>
        <end position="741"/>
    </location>
</feature>
<comment type="function">
    <text evidence="3 4 6 7 9">DNA-binding adapter subunit of the SEU-LUG transcriptional corepressor of the C class floral homeotic gene AGAMOUS during the early stages of floral meristem development. Is part of the A class cadastral complex that define the boundaries between the A and C class homeotic genes expression and function. Interacts together with APETALA2 and LEUNIG to repress AGAMOUS expression. In association with LUG, regulates petal shape through AGAMOUS-independent mechanisms. Controls cell division during petal development and enable the proper patterning of petal blade vasculature. Required for the proper elaboration of petal polarity along the adaxial/abaxial axis. May act through direct or indirect regulation of PHABULOSA and YAB1 and thus regulate cellular proliferation within the developing petal blade. In association with AINTEGUMENTA (ANT), coordinates patterning cues and cellular proliferation along the three positional axes of the developing gynoecium. Required for the development of the medial ridge and subsequent ovule initiation.</text>
</comment>
<comment type="subunit">
    <text evidence="3 5 6 8">Forms a corepressor complex with LUG; LUG is the transcription repressor subunit and SEU the specific DNA-binding adapter. Interacts with AGL24-AP1 and SVP-AP1 dimers when complexed to SEU. Interacts with AP1/AGL7 and SEP3/AGL9 (PubMed:15277686, PubMed:16679456, PubMed:16854969). Binds to LUH (PubMed:18390806).</text>
</comment>
<comment type="interaction">
    <interactant intactId="EBI-1771131">
        <id>Q8W234</id>
    </interactant>
    <interactant intactId="EBI-592003">
        <id>P35631</id>
        <label>AP1</label>
    </interactant>
    <organismsDiffer>false</organismsDiffer>
    <experiments>2</experiments>
</comment>
<comment type="interaction">
    <interactant intactId="EBI-1771131">
        <id>Q8W234</id>
    </interactant>
    <interactant intactId="EBI-1771115">
        <id>Q9FUY2</id>
        <label>LUG</label>
    </interactant>
    <organismsDiffer>false</organismsDiffer>
    <experiments>7</experiments>
</comment>
<comment type="interaction">
    <interactant intactId="EBI-1771131">
        <id>Q8W234</id>
    </interactant>
    <interactant intactId="EBI-592020">
        <id>O22456</id>
        <label>SEP3</label>
    </interactant>
    <organismsDiffer>false</organismsDiffer>
    <experiments>2</experiments>
</comment>
<comment type="subcellular location">
    <subcellularLocation>
        <location evidence="7">Nucleus</location>
        <location evidence="7">Nucleoplasm</location>
    </subcellularLocation>
    <text>Does not localize in the nucleolus.</text>
</comment>
<comment type="tissue specificity">
    <text evidence="7 8">Expressed in root, leaves, seedlings, vegetative and reproductive shoot apical meristems, seeds, floral meristems and all floral organs.</text>
</comment>
<comment type="induction">
    <text evidence="8">Induced by exposures to biotic stress (e.g. nematode and Botrytis cinerea) and abiotic stress (e.g. salt, genotoxic, wounding, drought and oxidative stress). Repressed by exposures to biotic stress (e.g. Agrobacterium tumefaciens) and abiotic stress (e.g. hypoxia, cycloheximide, 2,4-dichlorophenoxyacetic acid, AgNO(3) and aminoethoxyvinylglycine).</text>
</comment>
<comment type="domain">
    <text>Contains a dimerization domain which shares similarity with the LIM-binding domain of animal transcription coregulators.</text>
</comment>
<comment type="disruption phenotype">
    <text evidence="3 6 9">Ectopic and precocious expression of AGAMOUS, leading to partial homeotic transformation of the external floral organs.</text>
</comment>
<comment type="similarity">
    <text evidence="10">Belongs to the adn1/SEU family.</text>
</comment>
<comment type="sequence caution" evidence="10">
    <conflict type="erroneous gene model prediction">
        <sequence resource="EMBL-CDS" id="AAF63115"/>
    </conflict>
</comment>
<gene>
    <name type="primary">SEU</name>
    <name type="ordered locus">At1g43850</name>
    <name type="ORF">F28H19.10</name>
</gene>
<keyword id="KW-0175">Coiled coil</keyword>
<keyword id="KW-0217">Developmental protein</keyword>
<keyword id="KW-0221">Differentiation</keyword>
<keyword id="KW-0287">Flowering</keyword>
<keyword id="KW-0539">Nucleus</keyword>
<keyword id="KW-1185">Reference proteome</keyword>
<keyword id="KW-0678">Repressor</keyword>
<keyword id="KW-0804">Transcription</keyword>
<keyword id="KW-0805">Transcription regulation</keyword>
<accession>Q8W234</accession>
<accession>Q8GXE8</accession>
<accession>Q9MAR3</accession>
<dbReference type="EMBL" id="AF378782">
    <property type="protein sequence ID" value="AAL57277.1"/>
    <property type="molecule type" value="mRNA"/>
</dbReference>
<dbReference type="EMBL" id="AC006423">
    <property type="protein sequence ID" value="AAF63115.1"/>
    <property type="status" value="ALT_SEQ"/>
    <property type="molecule type" value="Genomic_DNA"/>
</dbReference>
<dbReference type="EMBL" id="CP002684">
    <property type="protein sequence ID" value="AEE32000.1"/>
    <property type="molecule type" value="Genomic_DNA"/>
</dbReference>
<dbReference type="EMBL" id="CP002684">
    <property type="protein sequence ID" value="AEE32001.1"/>
    <property type="molecule type" value="Genomic_DNA"/>
</dbReference>
<dbReference type="EMBL" id="AK118277">
    <property type="protein sequence ID" value="BAC42895.1"/>
    <property type="molecule type" value="mRNA"/>
</dbReference>
<dbReference type="PIR" id="D96502">
    <property type="entry name" value="D96502"/>
</dbReference>
<dbReference type="RefSeq" id="NP_001117434.1">
    <property type="nucleotide sequence ID" value="NM_001123962.2"/>
</dbReference>
<dbReference type="RefSeq" id="NP_175051.1">
    <property type="nucleotide sequence ID" value="NM_103511.4"/>
</dbReference>
<dbReference type="BioGRID" id="26206">
    <property type="interactions" value="8"/>
</dbReference>
<dbReference type="FunCoup" id="Q8W234">
    <property type="interactions" value="738"/>
</dbReference>
<dbReference type="IntAct" id="Q8W234">
    <property type="interactions" value="12"/>
</dbReference>
<dbReference type="STRING" id="3702.Q8W234"/>
<dbReference type="GlyGen" id="Q8W234">
    <property type="glycosylation" value="3 sites, 1 O-linked glycan (3 sites)"/>
</dbReference>
<dbReference type="iPTMnet" id="Q8W234"/>
<dbReference type="MetOSite" id="Q8W234"/>
<dbReference type="PaxDb" id="3702-AT1G43850.1"/>
<dbReference type="ProteomicsDB" id="234489"/>
<dbReference type="EnsemblPlants" id="AT1G43850.1">
    <property type="protein sequence ID" value="AT1G43850.1"/>
    <property type="gene ID" value="AT1G43850"/>
</dbReference>
<dbReference type="EnsemblPlants" id="AT1G43850.2">
    <property type="protein sequence ID" value="AT1G43850.2"/>
    <property type="gene ID" value="AT1G43850"/>
</dbReference>
<dbReference type="GeneID" id="840981"/>
<dbReference type="Gramene" id="AT1G43850.1">
    <property type="protein sequence ID" value="AT1G43850.1"/>
    <property type="gene ID" value="AT1G43850"/>
</dbReference>
<dbReference type="Gramene" id="AT1G43850.2">
    <property type="protein sequence ID" value="AT1G43850.2"/>
    <property type="gene ID" value="AT1G43850"/>
</dbReference>
<dbReference type="KEGG" id="ath:AT1G43850"/>
<dbReference type="Araport" id="AT1G43850"/>
<dbReference type="TAIR" id="AT1G43850">
    <property type="gene designation" value="SEU"/>
</dbReference>
<dbReference type="eggNOG" id="ENOG502QTWZ">
    <property type="taxonomic scope" value="Eukaryota"/>
</dbReference>
<dbReference type="HOGENOM" id="CLU_007007_0_0_1"/>
<dbReference type="InParanoid" id="Q8W234"/>
<dbReference type="OMA" id="AHLFQQP"/>
<dbReference type="PhylomeDB" id="Q8W234"/>
<dbReference type="CD-CODE" id="4299E36E">
    <property type="entry name" value="Nucleolus"/>
</dbReference>
<dbReference type="PRO" id="PR:Q8W234"/>
<dbReference type="Proteomes" id="UP000006548">
    <property type="component" value="Chromosome 1"/>
</dbReference>
<dbReference type="ExpressionAtlas" id="Q8W234">
    <property type="expression patterns" value="baseline and differential"/>
</dbReference>
<dbReference type="GO" id="GO:0005654">
    <property type="term" value="C:nucleoplasm"/>
    <property type="evidence" value="ECO:0007669"/>
    <property type="project" value="UniProtKB-SubCell"/>
</dbReference>
<dbReference type="GO" id="GO:0003677">
    <property type="term" value="F:DNA binding"/>
    <property type="evidence" value="ECO:0000314"/>
    <property type="project" value="TAIR"/>
</dbReference>
<dbReference type="GO" id="GO:0046982">
    <property type="term" value="F:protein heterodimerization activity"/>
    <property type="evidence" value="ECO:0000353"/>
    <property type="project" value="TAIR"/>
</dbReference>
<dbReference type="GO" id="GO:0003714">
    <property type="term" value="F:transcription corepressor activity"/>
    <property type="evidence" value="ECO:0000314"/>
    <property type="project" value="GO_Central"/>
</dbReference>
<dbReference type="GO" id="GO:0030154">
    <property type="term" value="P:cell differentiation"/>
    <property type="evidence" value="ECO:0007669"/>
    <property type="project" value="UniProtKB-KW"/>
</dbReference>
<dbReference type="GO" id="GO:0071217">
    <property type="term" value="P:cellular response to external biotic stimulus"/>
    <property type="evidence" value="ECO:0000314"/>
    <property type="project" value="UniProtKB"/>
</dbReference>
<dbReference type="GO" id="GO:0006974">
    <property type="term" value="P:DNA damage response"/>
    <property type="evidence" value="ECO:0000270"/>
    <property type="project" value="UniProtKB"/>
</dbReference>
<dbReference type="GO" id="GO:0009793">
    <property type="term" value="P:embryo development ending in seed dormancy"/>
    <property type="evidence" value="ECO:0000315"/>
    <property type="project" value="TAIR"/>
</dbReference>
<dbReference type="GO" id="GO:0048467">
    <property type="term" value="P:gynoecium development"/>
    <property type="evidence" value="ECO:0000315"/>
    <property type="project" value="TAIR"/>
</dbReference>
<dbReference type="GO" id="GO:0048481">
    <property type="term" value="P:plant ovule development"/>
    <property type="evidence" value="ECO:0000315"/>
    <property type="project" value="TAIR"/>
</dbReference>
<dbReference type="GO" id="GO:0009909">
    <property type="term" value="P:regulation of flower development"/>
    <property type="evidence" value="ECO:0000316"/>
    <property type="project" value="TAIR"/>
</dbReference>
<dbReference type="GO" id="GO:0009733">
    <property type="term" value="P:response to auxin"/>
    <property type="evidence" value="ECO:0000270"/>
    <property type="project" value="UniProtKB"/>
</dbReference>
<dbReference type="GO" id="GO:0009617">
    <property type="term" value="P:response to bacterium"/>
    <property type="evidence" value="ECO:0000270"/>
    <property type="project" value="UniProtKB"/>
</dbReference>
<dbReference type="GO" id="GO:0046898">
    <property type="term" value="P:response to cycloheximide"/>
    <property type="evidence" value="ECO:0000270"/>
    <property type="project" value="UniProtKB"/>
</dbReference>
<dbReference type="GO" id="GO:0009620">
    <property type="term" value="P:response to fungus"/>
    <property type="evidence" value="ECO:0000270"/>
    <property type="project" value="UniProtKB"/>
</dbReference>
<dbReference type="GO" id="GO:0001666">
    <property type="term" value="P:response to hypoxia"/>
    <property type="evidence" value="ECO:0000270"/>
    <property type="project" value="UniProtKB"/>
</dbReference>
<dbReference type="GO" id="GO:0009624">
    <property type="term" value="P:response to nematode"/>
    <property type="evidence" value="ECO:0000270"/>
    <property type="project" value="UniProtKB"/>
</dbReference>
<dbReference type="GO" id="GO:0006979">
    <property type="term" value="P:response to oxidative stress"/>
    <property type="evidence" value="ECO:0000270"/>
    <property type="project" value="UniProtKB"/>
</dbReference>
<dbReference type="GO" id="GO:0010272">
    <property type="term" value="P:response to silver ion"/>
    <property type="evidence" value="ECO:0000270"/>
    <property type="project" value="UniProtKB"/>
</dbReference>
<dbReference type="InterPro" id="IPR029005">
    <property type="entry name" value="LIM-bd/SEUSS"/>
</dbReference>
<dbReference type="PANTHER" id="PTHR10378">
    <property type="entry name" value="LIM DOMAIN-BINDING PROTEIN"/>
    <property type="match status" value="1"/>
</dbReference>
<dbReference type="Pfam" id="PF01803">
    <property type="entry name" value="LIM_bind"/>
    <property type="match status" value="1"/>
</dbReference>
<name>SEUSS_ARATH</name>
<reference key="1">
    <citation type="journal article" date="2002" name="Development">
        <title>SEUSS, a member of a novel family of plant regulatory proteins, represses floral homeotic gene expression with LEUNIG.</title>
        <authorList>
            <person name="Franks R.G."/>
            <person name="Wang C."/>
            <person name="Levin J.Z."/>
            <person name="Liu Z."/>
        </authorList>
    </citation>
    <scope>NUCLEOTIDE SEQUENCE [MRNA]</scope>
    <scope>CHARACTERIZATION</scope>
    <source>
        <strain>cv. Columbia</strain>
        <tissue>Root</tissue>
    </source>
</reference>
<reference key="2">
    <citation type="journal article" date="2000" name="Nature">
        <title>Sequence and analysis of chromosome 1 of the plant Arabidopsis thaliana.</title>
        <authorList>
            <person name="Theologis A."/>
            <person name="Ecker J.R."/>
            <person name="Palm C.J."/>
            <person name="Federspiel N.A."/>
            <person name="Kaul S."/>
            <person name="White O."/>
            <person name="Alonso J."/>
            <person name="Altafi H."/>
            <person name="Araujo R."/>
            <person name="Bowman C.L."/>
            <person name="Brooks S.Y."/>
            <person name="Buehler E."/>
            <person name="Chan A."/>
            <person name="Chao Q."/>
            <person name="Chen H."/>
            <person name="Cheuk R.F."/>
            <person name="Chin C.W."/>
            <person name="Chung M.K."/>
            <person name="Conn L."/>
            <person name="Conway A.B."/>
            <person name="Conway A.R."/>
            <person name="Creasy T.H."/>
            <person name="Dewar K."/>
            <person name="Dunn P."/>
            <person name="Etgu P."/>
            <person name="Feldblyum T.V."/>
            <person name="Feng J.-D."/>
            <person name="Fong B."/>
            <person name="Fujii C.Y."/>
            <person name="Gill J.E."/>
            <person name="Goldsmith A.D."/>
            <person name="Haas B."/>
            <person name="Hansen N.F."/>
            <person name="Hughes B."/>
            <person name="Huizar L."/>
            <person name="Hunter J.L."/>
            <person name="Jenkins J."/>
            <person name="Johnson-Hopson C."/>
            <person name="Khan S."/>
            <person name="Khaykin E."/>
            <person name="Kim C.J."/>
            <person name="Koo H.L."/>
            <person name="Kremenetskaia I."/>
            <person name="Kurtz D.B."/>
            <person name="Kwan A."/>
            <person name="Lam B."/>
            <person name="Langin-Hooper S."/>
            <person name="Lee A."/>
            <person name="Lee J.M."/>
            <person name="Lenz C.A."/>
            <person name="Li J.H."/>
            <person name="Li Y.-P."/>
            <person name="Lin X."/>
            <person name="Liu S.X."/>
            <person name="Liu Z.A."/>
            <person name="Luros J.S."/>
            <person name="Maiti R."/>
            <person name="Marziali A."/>
            <person name="Militscher J."/>
            <person name="Miranda M."/>
            <person name="Nguyen M."/>
            <person name="Nierman W.C."/>
            <person name="Osborne B.I."/>
            <person name="Pai G."/>
            <person name="Peterson J."/>
            <person name="Pham P.K."/>
            <person name="Rizzo M."/>
            <person name="Rooney T."/>
            <person name="Rowley D."/>
            <person name="Sakano H."/>
            <person name="Salzberg S.L."/>
            <person name="Schwartz J.R."/>
            <person name="Shinn P."/>
            <person name="Southwick A.M."/>
            <person name="Sun H."/>
            <person name="Tallon L.J."/>
            <person name="Tambunga G."/>
            <person name="Toriumi M.J."/>
            <person name="Town C.D."/>
            <person name="Utterback T."/>
            <person name="Van Aken S."/>
            <person name="Vaysberg M."/>
            <person name="Vysotskaia V.S."/>
            <person name="Walker M."/>
            <person name="Wu D."/>
            <person name="Yu G."/>
            <person name="Fraser C.M."/>
            <person name="Venter J.C."/>
            <person name="Davis R.W."/>
        </authorList>
    </citation>
    <scope>NUCLEOTIDE SEQUENCE [LARGE SCALE GENOMIC DNA]</scope>
    <source>
        <strain>cv. Columbia</strain>
    </source>
</reference>
<reference key="3">
    <citation type="journal article" date="2017" name="Plant J.">
        <title>Araport11: a complete reannotation of the Arabidopsis thaliana reference genome.</title>
        <authorList>
            <person name="Cheng C.Y."/>
            <person name="Krishnakumar V."/>
            <person name="Chan A.P."/>
            <person name="Thibaud-Nissen F."/>
            <person name="Schobel S."/>
            <person name="Town C.D."/>
        </authorList>
    </citation>
    <scope>GENOME REANNOTATION</scope>
    <source>
        <strain>cv. Columbia</strain>
    </source>
</reference>
<reference key="4">
    <citation type="journal article" date="2002" name="Science">
        <title>Functional annotation of a full-length Arabidopsis cDNA collection.</title>
        <authorList>
            <person name="Seki M."/>
            <person name="Narusaka M."/>
            <person name="Kamiya A."/>
            <person name="Ishida J."/>
            <person name="Satou M."/>
            <person name="Sakurai T."/>
            <person name="Nakajima M."/>
            <person name="Enju A."/>
            <person name="Akiyama K."/>
            <person name="Oono Y."/>
            <person name="Muramatsu M."/>
            <person name="Hayashizaki Y."/>
            <person name="Kawai J."/>
            <person name="Carninci P."/>
            <person name="Itoh M."/>
            <person name="Ishii Y."/>
            <person name="Arakawa T."/>
            <person name="Shibata K."/>
            <person name="Shinagawa A."/>
            <person name="Shinozaki K."/>
        </authorList>
    </citation>
    <scope>NUCLEOTIDE SEQUENCE [LARGE SCALE MRNA] OF 586-877</scope>
    <source>
        <strain>cv. Columbia</strain>
    </source>
</reference>
<reference key="5">
    <citation type="journal article" date="2004" name="Proc. Natl. Acad. Sci. U.S.A.">
        <title>Transcriptional repression of target genes by LEUNIG and SEUSS, two interacting regulatory proteins for Arabidopsis flower development.</title>
        <authorList>
            <person name="Sridhar V.V."/>
            <person name="Surendrarao A."/>
            <person name="Gonzalez D."/>
            <person name="Conlan R.S."/>
            <person name="Liu Z."/>
        </authorList>
    </citation>
    <scope>FUNCTION</scope>
    <scope>DISRUPTION PHENOTYPE</scope>
    <scope>INTERACTION WITH LUG</scope>
</reference>
<reference key="6">
    <citation type="journal article" date="2006" name="Development">
        <title>APETALA1 and SEPALLATA3 interact with SEUSS to mediate transcription repression during flower development.</title>
        <authorList>
            <person name="Sridhar V.V."/>
            <person name="Surendrarao A."/>
            <person name="Liu Z."/>
        </authorList>
    </citation>
    <scope>FUNCTION</scope>
    <scope>INTERACTION WITH AP1 AND SEP3</scope>
    <scope>DISRUPTION PHENOTYPE</scope>
</reference>
<reference key="7">
    <citation type="journal article" date="2006" name="Planta">
        <title>SEUSS and LEUNIG regulate cell proliferation, vascular development and organ polarity in Arabidopsis petals.</title>
        <authorList>
            <person name="Franks R.G."/>
            <person name="Liu Z."/>
            <person name="Fischer R.L."/>
        </authorList>
    </citation>
    <scope>FUNCTION</scope>
</reference>
<reference key="8">
    <citation type="journal article" date="2006" name="Plant Cell">
        <title>AGL24, SHORT VEGETATIVE PHASE, and APETALA1 redundantly control AGAMOUS during early stages of flower development in Arabidopsis.</title>
        <authorList>
            <person name="Gregis V."/>
            <person name="Sessa A."/>
            <person name="Colombo L."/>
            <person name="Kater M.M."/>
        </authorList>
    </citation>
    <scope>INTERACTION WITH LUG; AGL24-AP1 AND SVP-AP1</scope>
</reference>
<reference key="9">
    <citation type="journal article" date="2008" name="Plant Physiol.">
        <title>SEUSS and AINTEGUMENTA mediate patterning and ovule initiation during gynoecium medial domain development.</title>
        <authorList>
            <person name="Azhakanandam S."/>
            <person name="Nole-Wilson S."/>
            <person name="Bao F."/>
            <person name="Franks R.G."/>
        </authorList>
    </citation>
    <scope>FUNCTION</scope>
    <scope>SUBCELLULAR LOCATION</scope>
    <scope>TISSUE SPECIFICITY</scope>
</reference>
<reference key="10">
    <citation type="journal article" date="2008" name="Plant Physiol.">
        <title>LEUNIG_HOMOLOG and LEUNIG perform partially redundant functions during Arabidopsis embryo and floral development.</title>
        <authorList>
            <person name="Sitaraman J."/>
            <person name="Bui M."/>
            <person name="Liu Z."/>
        </authorList>
    </citation>
    <scope>INTERACTION WITH LUH</scope>
    <scope>TISSUE SPECIFICITY</scope>
    <scope>INDUCTION BY BIOTIC AND ABIOTIC STRESSES</scope>
</reference>
<reference key="11">
    <citation type="journal article" date="2010" name="Plant Physiol.">
        <title>SEUSS and SEUSS-LIKE transcriptional adaptors regulate floral and embryonic development in Arabidopsis.</title>
        <authorList>
            <person name="Bao F."/>
            <person name="Azhakanandam S."/>
            <person name="Franks R.G."/>
        </authorList>
    </citation>
    <scope>FUNCTION</scope>
    <scope>DISRUPTION PHENOTYPE</scope>
</reference>
<evidence type="ECO:0000255" key="1"/>
<evidence type="ECO:0000256" key="2">
    <source>
        <dbReference type="SAM" id="MobiDB-lite"/>
    </source>
</evidence>
<evidence type="ECO:0000269" key="3">
    <source>
    </source>
</evidence>
<evidence type="ECO:0000269" key="4">
    <source>
    </source>
</evidence>
<evidence type="ECO:0000269" key="5">
    <source>
    </source>
</evidence>
<evidence type="ECO:0000269" key="6">
    <source>
    </source>
</evidence>
<evidence type="ECO:0000269" key="7">
    <source>
    </source>
</evidence>
<evidence type="ECO:0000269" key="8">
    <source>
    </source>
</evidence>
<evidence type="ECO:0000269" key="9">
    <source>
    </source>
</evidence>
<evidence type="ECO:0000305" key="10"/>
<sequence>MVPSEPPNPVGGGENVPPSILGGQGGAPLPSQPAFPSLVSPRTQFGNNMSMSMLGNAPNISSLLNNQSFVNGIPGSMISMDTSGAESDPMSNVGFSGLSSFNASSMVSPRSSGQVQGQQFSNVSANQLLAEQQRNKKMETQSFQHGQQQSMQQQFSTVRGGGLAGVGPVKMEPGQVSNDQQHGQVQQQQQKMLRNLGSVKLEPQQIQAMRNLAQVKMEPQHSEQSLFLQQQQRQQQQQQQQQFLQMPGQSPQAQMNIFQQQRLMQLQQQQLLKSMPQQRPQLPQQFQQQNLPLRPPLKPVYEPGMGAQRLTQYMYRQQHRPEDNNIEFWRKFVAEYFAPNAKKRWCVSMYGSGRQTTGVFPQDVWHCEICNRKPGRGFEATAEVLPRLFKIKYESGTLEELLYVDMPRESQNSSGQIVLEYAKATQESVFEHLRVVRDGQLRIVFSPDLKIFSWEFCARRHEELIPRRLLIPQVSQLGSAAQKYQQAAQNATTDSALPELQNNCNMFVASARQLAKALEVPLVNDLGYTKRYVRCLQISEVVNSMKDLIDYSRETRTGPIESLAKFPRRTGPSSALPGPSPQQASDQLRQQQQQQQQQQQQQQQQQQQQQQQQTVSQNTNSDQSSRQVALMQGNPSNGVNYAFNAASASTSTSSIAGLIHQNSMKGRHQNAAYNPPNSPYGGNSVQMQSPSSSGTMVPSSSQQQHNLPTFQSPTSSSNNNNPSQNGIPSVNHMGSTNSPAMQQAGEVDGNESSSVQKILNEILMNNQAHNNSSGGSMVGHGSFGNDGKGQANVNSSGVLLMNGQVNNNNNTNIGGAGGFGGGIGQSMAANGINNINGNNSLMNGRVGMMVRDPNGQQDLGNQLLGAVNGFNNFDWNA</sequence>
<proteinExistence type="evidence at protein level"/>
<organism>
    <name type="scientific">Arabidopsis thaliana</name>
    <name type="common">Mouse-ear cress</name>
    <dbReference type="NCBI Taxonomy" id="3702"/>
    <lineage>
        <taxon>Eukaryota</taxon>
        <taxon>Viridiplantae</taxon>
        <taxon>Streptophyta</taxon>
        <taxon>Embryophyta</taxon>
        <taxon>Tracheophyta</taxon>
        <taxon>Spermatophyta</taxon>
        <taxon>Magnoliopsida</taxon>
        <taxon>eudicotyledons</taxon>
        <taxon>Gunneridae</taxon>
        <taxon>Pentapetalae</taxon>
        <taxon>rosids</taxon>
        <taxon>malvids</taxon>
        <taxon>Brassicales</taxon>
        <taxon>Brassicaceae</taxon>
        <taxon>Camelineae</taxon>
        <taxon>Arabidopsis</taxon>
    </lineage>
</organism>
<protein>
    <recommendedName>
        <fullName>Transcriptional corepressor SEUSS</fullName>
        <shortName>AtSEU</shortName>
    </recommendedName>
</protein>